<proteinExistence type="inferred from homology"/>
<name>GATA_PROM3</name>
<gene>
    <name evidence="1" type="primary">gatA</name>
    <name type="ordered locus">P9303_15821</name>
</gene>
<organism>
    <name type="scientific">Prochlorococcus marinus (strain MIT 9303)</name>
    <dbReference type="NCBI Taxonomy" id="59922"/>
    <lineage>
        <taxon>Bacteria</taxon>
        <taxon>Bacillati</taxon>
        <taxon>Cyanobacteriota</taxon>
        <taxon>Cyanophyceae</taxon>
        <taxon>Synechococcales</taxon>
        <taxon>Prochlorococcaceae</taxon>
        <taxon>Prochlorococcus</taxon>
    </lineage>
</organism>
<sequence>MAIAEWRQQLKLGEVSARELIDHQLARIAVVDPTLHAFLDVTAERARADADRIDEALAAGESLPPLAGVPLAIKDNLCTKGIRTTCSSRMLETFVPPYESTVTERLWQAGAVLLGKTNLDEFAMGSSTETSAFGATSNPWDISRVPGGSSGGSAAAVAAGECMAALGSDTGGSIRQPASFCGVVGLKPTYGRVSRWGLVAFASSLDQVGPFTTNVADAAELLQVIAGSDPRDSTCLNVAVPDYCSALSQPMSGVRIGLIRECFDQNGLDAQVKSTVLEAAEKLQSLGAELVEVSCPRFSDGIATYYVIAPSEASANLARYDGVKYGYRAEGADALAAMTARSRAEGFGSEVQRRILIGTYALSAGYMDAYYKKAQQVRTLIRQDFDAAFQTVDVLLTPTSPTTAFQVGAHADDPLAMYLADLLTIPANLAGLPAISLPCGFDDDGLPIGVQLIANVLEESRLLQVAFHYEQSANVMTNHPQGNFIP</sequence>
<comment type="function">
    <text evidence="1">Allows the formation of correctly charged Gln-tRNA(Gln) through the transamidation of misacylated Glu-tRNA(Gln) in organisms which lack glutaminyl-tRNA synthetase. The reaction takes place in the presence of glutamine and ATP through an activated gamma-phospho-Glu-tRNA(Gln).</text>
</comment>
<comment type="catalytic activity">
    <reaction evidence="1">
        <text>L-glutamyl-tRNA(Gln) + L-glutamine + ATP + H2O = L-glutaminyl-tRNA(Gln) + L-glutamate + ADP + phosphate + H(+)</text>
        <dbReference type="Rhea" id="RHEA:17521"/>
        <dbReference type="Rhea" id="RHEA-COMP:9681"/>
        <dbReference type="Rhea" id="RHEA-COMP:9684"/>
        <dbReference type="ChEBI" id="CHEBI:15377"/>
        <dbReference type="ChEBI" id="CHEBI:15378"/>
        <dbReference type="ChEBI" id="CHEBI:29985"/>
        <dbReference type="ChEBI" id="CHEBI:30616"/>
        <dbReference type="ChEBI" id="CHEBI:43474"/>
        <dbReference type="ChEBI" id="CHEBI:58359"/>
        <dbReference type="ChEBI" id="CHEBI:78520"/>
        <dbReference type="ChEBI" id="CHEBI:78521"/>
        <dbReference type="ChEBI" id="CHEBI:456216"/>
        <dbReference type="EC" id="6.3.5.7"/>
    </reaction>
</comment>
<comment type="subunit">
    <text evidence="1">Heterotrimer of A, B and C subunits.</text>
</comment>
<comment type="similarity">
    <text evidence="1">Belongs to the amidase family. GatA subfamily.</text>
</comment>
<reference key="1">
    <citation type="journal article" date="2007" name="PLoS Genet.">
        <title>Patterns and implications of gene gain and loss in the evolution of Prochlorococcus.</title>
        <authorList>
            <person name="Kettler G.C."/>
            <person name="Martiny A.C."/>
            <person name="Huang K."/>
            <person name="Zucker J."/>
            <person name="Coleman M.L."/>
            <person name="Rodrigue S."/>
            <person name="Chen F."/>
            <person name="Lapidus A."/>
            <person name="Ferriera S."/>
            <person name="Johnson J."/>
            <person name="Steglich C."/>
            <person name="Church G.M."/>
            <person name="Richardson P."/>
            <person name="Chisholm S.W."/>
        </authorList>
    </citation>
    <scope>NUCLEOTIDE SEQUENCE [LARGE SCALE GENOMIC DNA]</scope>
    <source>
        <strain>MIT 9303</strain>
    </source>
</reference>
<keyword id="KW-0067">ATP-binding</keyword>
<keyword id="KW-0436">Ligase</keyword>
<keyword id="KW-0547">Nucleotide-binding</keyword>
<keyword id="KW-0648">Protein biosynthesis</keyword>
<protein>
    <recommendedName>
        <fullName evidence="1">Glutamyl-tRNA(Gln) amidotransferase subunit A</fullName>
        <shortName evidence="1">Glu-ADT subunit A</shortName>
        <ecNumber evidence="1">6.3.5.7</ecNumber>
    </recommendedName>
</protein>
<accession>A2CA16</accession>
<feature type="chain" id="PRO_1000015882" description="Glutamyl-tRNA(Gln) amidotransferase subunit A">
    <location>
        <begin position="1"/>
        <end position="486"/>
    </location>
</feature>
<feature type="active site" description="Charge relay system" evidence="1">
    <location>
        <position position="74"/>
    </location>
</feature>
<feature type="active site" description="Charge relay system" evidence="1">
    <location>
        <position position="149"/>
    </location>
</feature>
<feature type="active site" description="Acyl-ester intermediate" evidence="1">
    <location>
        <position position="173"/>
    </location>
</feature>
<evidence type="ECO:0000255" key="1">
    <source>
        <dbReference type="HAMAP-Rule" id="MF_00120"/>
    </source>
</evidence>
<dbReference type="EC" id="6.3.5.7" evidence="1"/>
<dbReference type="EMBL" id="CP000554">
    <property type="protein sequence ID" value="ABM78326.1"/>
    <property type="molecule type" value="Genomic_DNA"/>
</dbReference>
<dbReference type="RefSeq" id="WP_011826216.1">
    <property type="nucleotide sequence ID" value="NC_008820.1"/>
</dbReference>
<dbReference type="SMR" id="A2CA16"/>
<dbReference type="STRING" id="59922.P9303_15821"/>
<dbReference type="KEGG" id="pmf:P9303_15821"/>
<dbReference type="HOGENOM" id="CLU_009600_0_3_3"/>
<dbReference type="BioCyc" id="PMAR59922:G1G80-1378-MONOMER"/>
<dbReference type="Proteomes" id="UP000002274">
    <property type="component" value="Chromosome"/>
</dbReference>
<dbReference type="GO" id="GO:0030956">
    <property type="term" value="C:glutamyl-tRNA(Gln) amidotransferase complex"/>
    <property type="evidence" value="ECO:0007669"/>
    <property type="project" value="InterPro"/>
</dbReference>
<dbReference type="GO" id="GO:0005524">
    <property type="term" value="F:ATP binding"/>
    <property type="evidence" value="ECO:0007669"/>
    <property type="project" value="UniProtKB-KW"/>
</dbReference>
<dbReference type="GO" id="GO:0050567">
    <property type="term" value="F:glutaminyl-tRNA synthase (glutamine-hydrolyzing) activity"/>
    <property type="evidence" value="ECO:0007669"/>
    <property type="project" value="UniProtKB-UniRule"/>
</dbReference>
<dbReference type="GO" id="GO:0006412">
    <property type="term" value="P:translation"/>
    <property type="evidence" value="ECO:0007669"/>
    <property type="project" value="UniProtKB-UniRule"/>
</dbReference>
<dbReference type="Gene3D" id="3.90.1300.10">
    <property type="entry name" value="Amidase signature (AS) domain"/>
    <property type="match status" value="1"/>
</dbReference>
<dbReference type="HAMAP" id="MF_00120">
    <property type="entry name" value="GatA"/>
    <property type="match status" value="1"/>
</dbReference>
<dbReference type="InterPro" id="IPR000120">
    <property type="entry name" value="Amidase"/>
</dbReference>
<dbReference type="InterPro" id="IPR020556">
    <property type="entry name" value="Amidase_CS"/>
</dbReference>
<dbReference type="InterPro" id="IPR023631">
    <property type="entry name" value="Amidase_dom"/>
</dbReference>
<dbReference type="InterPro" id="IPR036928">
    <property type="entry name" value="AS_sf"/>
</dbReference>
<dbReference type="InterPro" id="IPR004412">
    <property type="entry name" value="GatA"/>
</dbReference>
<dbReference type="NCBIfam" id="TIGR00132">
    <property type="entry name" value="gatA"/>
    <property type="match status" value="1"/>
</dbReference>
<dbReference type="PANTHER" id="PTHR11895:SF151">
    <property type="entry name" value="GLUTAMYL-TRNA(GLN) AMIDOTRANSFERASE SUBUNIT A"/>
    <property type="match status" value="1"/>
</dbReference>
<dbReference type="PANTHER" id="PTHR11895">
    <property type="entry name" value="TRANSAMIDASE"/>
    <property type="match status" value="1"/>
</dbReference>
<dbReference type="Pfam" id="PF01425">
    <property type="entry name" value="Amidase"/>
    <property type="match status" value="1"/>
</dbReference>
<dbReference type="SUPFAM" id="SSF75304">
    <property type="entry name" value="Amidase signature (AS) enzymes"/>
    <property type="match status" value="1"/>
</dbReference>
<dbReference type="PROSITE" id="PS00571">
    <property type="entry name" value="AMIDASES"/>
    <property type="match status" value="1"/>
</dbReference>